<reference key="1">
    <citation type="submission" date="1998-01" db="EMBL/GenBank/DDBJ databases">
        <title>Comparison of avian influenza nonstructural gene sequences.</title>
        <authorList>
            <person name="Suarez D.L."/>
        </authorList>
    </citation>
    <scope>NUCLEOTIDE SEQUENCE [GENOMIC RNA]</scope>
</reference>
<reference key="2">
    <citation type="journal article" date="2006" name="Science">
        <title>Large-scale sequence analysis of avian influenza isolates.</title>
        <authorList>
            <person name="Obenauer J.C."/>
            <person name="Denson J."/>
            <person name="Mehta P.K."/>
            <person name="Su X."/>
            <person name="Mukatira S."/>
            <person name="Finkelstein D.B."/>
            <person name="Xu X."/>
            <person name="Wang J."/>
            <person name="Ma J."/>
            <person name="Fan Y."/>
            <person name="Rakestraw K.M."/>
            <person name="Webster R.G."/>
            <person name="Hoffmann E."/>
            <person name="Krauss S."/>
            <person name="Zheng J."/>
            <person name="Zhang Z."/>
            <person name="Naeve C.W."/>
        </authorList>
    </citation>
    <scope>NUCLEOTIDE SEQUENCE [GENOMIC RNA]</scope>
</reference>
<comment type="function">
    <text evidence="1">Mediates the nuclear export of encapsidated genomic RNAs (ribonucleoproteins, RNPs). Acts as an adapter between viral RNPs complexes and the nuclear export machinery of the cell. Possesses no intrinsic RNA-binding activity, but includes a C-terminal M1-binding domain. This domain is believed to allow recognition of RNPs bound to the protein M1. Since protein M1 is not available in large quantities before late stages of infection, such an indirect recognition mechanism probably ensures that genomic RNPs are not exported from the host nucleus until sufficient quantities of viral mRNA and progeny genomic RNA have been synthesized. Furthermore, the RNPs enter the host cytoplasm only when associated with the M1 protein that is necessary to guide them to the plasma membrane. May down-regulate viral RNA synthesis when overproduced.</text>
</comment>
<comment type="subunit">
    <text evidence="1">Interacts with protein M1. May interact with host nucleoporin RAB/HRB and exportin XPO1/CRM1.</text>
</comment>
<comment type="subcellular location">
    <subcellularLocation>
        <location evidence="1">Virion</location>
    </subcellularLocation>
    <subcellularLocation>
        <location evidence="1">Host nucleus</location>
    </subcellularLocation>
</comment>
<comment type="alternative products">
    <event type="alternative splicing"/>
    <isoform>
        <id>P69264-1</id>
        <name>NEP</name>
        <name>NS2</name>
        <sequence type="displayed"/>
    </isoform>
    <isoform>
        <id>Q76UX6-1</id>
        <name>NS1</name>
        <sequence type="external"/>
    </isoform>
</comment>
<comment type="miscellaneous">
    <text>Average number present in a viral particle is estimated to be 130-200 molecules.</text>
</comment>
<comment type="similarity">
    <text evidence="1">Belongs to the influenza viruses NEP family.</text>
</comment>
<organism>
    <name type="scientific">Influenza A virus (strain A/Gull/Maryland/704/1977 H13N6)</name>
    <dbReference type="NCBI Taxonomy" id="384499"/>
    <lineage>
        <taxon>Viruses</taxon>
        <taxon>Riboviria</taxon>
        <taxon>Orthornavirae</taxon>
        <taxon>Negarnaviricota</taxon>
        <taxon>Polyploviricotina</taxon>
        <taxon>Insthoviricetes</taxon>
        <taxon>Articulavirales</taxon>
        <taxon>Orthomyxoviridae</taxon>
        <taxon>Alphainfluenzavirus</taxon>
        <taxon>Alphainfluenzavirus influenzae</taxon>
        <taxon>Influenza A virus</taxon>
    </lineage>
</organism>
<evidence type="ECO:0000255" key="1">
    <source>
        <dbReference type="HAMAP-Rule" id="MF_04067"/>
    </source>
</evidence>
<gene>
    <name evidence="1" type="primary">NS</name>
</gene>
<dbReference type="EMBL" id="U96737">
    <property type="protein sequence ID" value="AAB93934.1"/>
    <property type="molecule type" value="Genomic_RNA"/>
</dbReference>
<dbReference type="EMBL" id="CY014698">
    <property type="protein sequence ID" value="ABI84572.1"/>
    <property type="molecule type" value="Genomic_RNA"/>
</dbReference>
<dbReference type="SMR" id="P69264"/>
<dbReference type="Proteomes" id="UP000000828">
    <property type="component" value="Genome"/>
</dbReference>
<dbReference type="GO" id="GO:0042025">
    <property type="term" value="C:host cell nucleus"/>
    <property type="evidence" value="ECO:0007669"/>
    <property type="project" value="UniProtKB-SubCell"/>
</dbReference>
<dbReference type="GO" id="GO:0044423">
    <property type="term" value="C:virion component"/>
    <property type="evidence" value="ECO:0007669"/>
    <property type="project" value="UniProtKB-UniRule"/>
</dbReference>
<dbReference type="GO" id="GO:0039675">
    <property type="term" value="P:exit of virus from host cell nucleus through nuclear pore"/>
    <property type="evidence" value="ECO:0007669"/>
    <property type="project" value="UniProtKB-UniRule"/>
</dbReference>
<dbReference type="Gene3D" id="1.10.287.230">
    <property type="match status" value="1"/>
</dbReference>
<dbReference type="HAMAP" id="MF_04067">
    <property type="entry name" value="INFV_NEP"/>
    <property type="match status" value="1"/>
</dbReference>
<dbReference type="InterPro" id="IPR000968">
    <property type="entry name" value="Flu_NS2"/>
</dbReference>
<dbReference type="Pfam" id="PF00601">
    <property type="entry name" value="Flu_NS2"/>
    <property type="match status" value="1"/>
</dbReference>
<dbReference type="SUPFAM" id="SSF101156">
    <property type="entry name" value="Nonstructural protein ns2, Nep, M1-binding domain"/>
    <property type="match status" value="1"/>
</dbReference>
<organismHost>
    <name type="scientific">Aves</name>
    <dbReference type="NCBI Taxonomy" id="8782"/>
</organismHost>
<protein>
    <recommendedName>
        <fullName evidence="1">Nuclear export protein</fullName>
        <shortName evidence="1">NEP</shortName>
    </recommendedName>
    <alternativeName>
        <fullName evidence="1">Non-structural protein 2</fullName>
        <shortName evidence="1">NS2</shortName>
    </alternativeName>
</protein>
<keyword id="KW-0025">Alternative splicing</keyword>
<keyword id="KW-1048">Host nucleus</keyword>
<keyword id="KW-0945">Host-virus interaction</keyword>
<keyword id="KW-0813">Transport</keyword>
<keyword id="KW-0946">Virion</keyword>
<sequence>MDSNTVSSFQDILVRMSKMQLESSSGDLNGMITQFESLKLYRDLLGEAVMRMGDLHLLQSRNGKWREQLSQKFEEIRWLIEEVRHKLKTTESSFEQITFMQALQLLLEVEQEIRTFSFQLI</sequence>
<proteinExistence type="inferred from homology"/>
<name>NEP_I77AF</name>
<feature type="chain" id="PRO_0000078988" description="Nuclear export protein">
    <location>
        <begin position="1"/>
        <end position="121"/>
    </location>
</feature>
<feature type="short sequence motif" description="Nuclear export signal" evidence="1">
    <location>
        <begin position="12"/>
        <end position="21"/>
    </location>
</feature>
<feature type="short sequence motif" description="Nuclear export signal" evidence="1">
    <location>
        <begin position="85"/>
        <end position="94"/>
    </location>
</feature>
<accession>P69264</accession>
<accession>O57278</accession>
<accession>Q0A411</accession>